<sequence>MMQFHFQFYVGPVFTLRPSKGFLSTCLVSFLFVTTTFCSYAIADLNSDRQALLAFAASVPHLRRLNWNSTNHICKSWVGVTCTSDGTSVHALRLPGIGLLGPIPPNTLGKLESLRILSLRSNLLSGNLPPDIHSLPSLDYIYLQHNNFSGEVPSFVSRQLNILDLSFNSFTGKIPATFQNLKQLTGLSLQNNKLSGPVPNLDTVSLRRLNLSNNHLNGSIPSALGGFPSSSFSGNTLLCGLPLQPCATSSPPPSLTPHISTPPLPPFPHKEGSKRKLHVSTIIPIAAGGAALLLLITVIILCCCIKKKDKREDSIVKVKTLTEKAKQEFGSGVQEPEKNKLVFFNGCSYNFDLEDLLRASAEVLGKGSYGTAYKAVLEESTTVVVKRLKEVAAGKREFEQQMEIISRVGNHPSVVPLRAYYYSKDEKLMVCDYYPAGNLSSLLHGNRGSEKTPLDWDSRVKITLSAAKGIAHLHAAGGPKFSHGNIKSSNVIMKQESDACISDFGLTPLMAVPIAPMRGAGYRAPEVMETRKHTHKSDVYSFGVLILEMLTGKSPVQSPSRDDMVDLPRWVQSVVREEWTSEVFDIELMRFQNIEEEMVQMLQIAMACVAQVPEVRPTMDDVVRMIEEIRVSDSETTRPSSDDNSKPKDSNVQV</sequence>
<keyword id="KW-0067">ATP-binding</keyword>
<keyword id="KW-0433">Leucine-rich repeat</keyword>
<keyword id="KW-0472">Membrane</keyword>
<keyword id="KW-0547">Nucleotide-binding</keyword>
<keyword id="KW-0597">Phosphoprotein</keyword>
<keyword id="KW-0675">Receptor</keyword>
<keyword id="KW-1185">Reference proteome</keyword>
<keyword id="KW-0677">Repeat</keyword>
<keyword id="KW-0732">Signal</keyword>
<keyword id="KW-0812">Transmembrane</keyword>
<keyword id="KW-1133">Transmembrane helix</keyword>
<reference key="1">
    <citation type="journal article" date="2000" name="DNA Res.">
        <title>Structural analysis of Arabidopsis thaliana chromosome 5. X. Sequence features of the regions of 3,076,755 bp covered by sixty P1 and TAC clones.</title>
        <authorList>
            <person name="Sato S."/>
            <person name="Nakamura Y."/>
            <person name="Kaneko T."/>
            <person name="Katoh T."/>
            <person name="Asamizu E."/>
            <person name="Kotani H."/>
            <person name="Tabata S."/>
        </authorList>
    </citation>
    <scope>NUCLEOTIDE SEQUENCE [LARGE SCALE GENOMIC DNA]</scope>
    <source>
        <strain>cv. Columbia</strain>
    </source>
</reference>
<reference key="2">
    <citation type="journal article" date="2017" name="Plant J.">
        <title>Araport11: a complete reannotation of the Arabidopsis thaliana reference genome.</title>
        <authorList>
            <person name="Cheng C.Y."/>
            <person name="Krishnakumar V."/>
            <person name="Chan A.P."/>
            <person name="Thibaud-Nissen F."/>
            <person name="Schobel S."/>
            <person name="Town C.D."/>
        </authorList>
    </citation>
    <scope>GENOME REANNOTATION</scope>
    <source>
        <strain>cv. Columbia</strain>
    </source>
</reference>
<reference key="3">
    <citation type="journal article" date="2003" name="Science">
        <title>Empirical analysis of transcriptional activity in the Arabidopsis genome.</title>
        <authorList>
            <person name="Yamada K."/>
            <person name="Lim J."/>
            <person name="Dale J.M."/>
            <person name="Chen H."/>
            <person name="Shinn P."/>
            <person name="Palm C.J."/>
            <person name="Southwick A.M."/>
            <person name="Wu H.C."/>
            <person name="Kim C.J."/>
            <person name="Nguyen M."/>
            <person name="Pham P.K."/>
            <person name="Cheuk R.F."/>
            <person name="Karlin-Newmann G."/>
            <person name="Liu S.X."/>
            <person name="Lam B."/>
            <person name="Sakano H."/>
            <person name="Wu T."/>
            <person name="Yu G."/>
            <person name="Miranda M."/>
            <person name="Quach H.L."/>
            <person name="Tripp M."/>
            <person name="Chang C.H."/>
            <person name="Lee J.M."/>
            <person name="Toriumi M.J."/>
            <person name="Chan M.M."/>
            <person name="Tang C.C."/>
            <person name="Onodera C.S."/>
            <person name="Deng J.M."/>
            <person name="Akiyama K."/>
            <person name="Ansari Y."/>
            <person name="Arakawa T."/>
            <person name="Banh J."/>
            <person name="Banno F."/>
            <person name="Bowser L."/>
            <person name="Brooks S.Y."/>
            <person name="Carninci P."/>
            <person name="Chao Q."/>
            <person name="Choy N."/>
            <person name="Enju A."/>
            <person name="Goldsmith A.D."/>
            <person name="Gurjal M."/>
            <person name="Hansen N.F."/>
            <person name="Hayashizaki Y."/>
            <person name="Johnson-Hopson C."/>
            <person name="Hsuan V.W."/>
            <person name="Iida K."/>
            <person name="Karnes M."/>
            <person name="Khan S."/>
            <person name="Koesema E."/>
            <person name="Ishida J."/>
            <person name="Jiang P.X."/>
            <person name="Jones T."/>
            <person name="Kawai J."/>
            <person name="Kamiya A."/>
            <person name="Meyers C."/>
            <person name="Nakajima M."/>
            <person name="Narusaka M."/>
            <person name="Seki M."/>
            <person name="Sakurai T."/>
            <person name="Satou M."/>
            <person name="Tamse R."/>
            <person name="Vaysberg M."/>
            <person name="Wallender E.K."/>
            <person name="Wong C."/>
            <person name="Yamamura Y."/>
            <person name="Yuan S."/>
            <person name="Shinozaki K."/>
            <person name="Davis R.W."/>
            <person name="Theologis A."/>
            <person name="Ecker J.R."/>
        </authorList>
    </citation>
    <scope>NUCLEOTIDE SEQUENCE [LARGE SCALE MRNA]</scope>
    <source>
        <strain>cv. Columbia</strain>
    </source>
</reference>
<name>Y5830_ARATH</name>
<protein>
    <recommendedName>
        <fullName>Probable inactive receptor kinase At5g58300</fullName>
    </recommendedName>
</protein>
<proteinExistence type="evidence at protein level"/>
<evidence type="ECO:0000250" key="1">
    <source>
        <dbReference type="UniProtKB" id="Q94AG2"/>
    </source>
</evidence>
<evidence type="ECO:0000250" key="2">
    <source>
        <dbReference type="UniProtKB" id="Q94F62"/>
    </source>
</evidence>
<evidence type="ECO:0000250" key="3">
    <source>
        <dbReference type="UniProtKB" id="Q9LSI9"/>
    </source>
</evidence>
<evidence type="ECO:0000255" key="4"/>
<evidence type="ECO:0000255" key="5">
    <source>
        <dbReference type="PROSITE-ProRule" id="PRU00159"/>
    </source>
</evidence>
<evidence type="ECO:0000256" key="6">
    <source>
        <dbReference type="SAM" id="MobiDB-lite"/>
    </source>
</evidence>
<evidence type="ECO:0000305" key="7"/>
<gene>
    <name type="ordered locus">At5g58300</name>
    <name type="ORF">MCK7.17</name>
</gene>
<dbReference type="EMBL" id="AB019228">
    <property type="protein sequence ID" value="BAA96921.1"/>
    <property type="molecule type" value="Genomic_DNA"/>
</dbReference>
<dbReference type="EMBL" id="CP002688">
    <property type="protein sequence ID" value="AED97030.1"/>
    <property type="molecule type" value="Genomic_DNA"/>
</dbReference>
<dbReference type="EMBL" id="CP002688">
    <property type="protein sequence ID" value="AED97031.1"/>
    <property type="molecule type" value="Genomic_DNA"/>
</dbReference>
<dbReference type="EMBL" id="CP002688">
    <property type="protein sequence ID" value="ANM70827.1"/>
    <property type="molecule type" value="Genomic_DNA"/>
</dbReference>
<dbReference type="EMBL" id="AY065009">
    <property type="protein sequence ID" value="AAL57654.1"/>
    <property type="molecule type" value="mRNA"/>
</dbReference>
<dbReference type="EMBL" id="BT001138">
    <property type="protein sequence ID" value="AAN64529.1"/>
    <property type="molecule type" value="mRNA"/>
</dbReference>
<dbReference type="RefSeq" id="NP_001119458.1">
    <property type="nucleotide sequence ID" value="NM_001125986.1"/>
</dbReference>
<dbReference type="RefSeq" id="NP_001318827.1">
    <property type="nucleotide sequence ID" value="NM_001345296.1"/>
</dbReference>
<dbReference type="RefSeq" id="NP_200638.1">
    <property type="nucleotide sequence ID" value="NM_125215.5"/>
</dbReference>
<dbReference type="SMR" id="Q9LVM0"/>
<dbReference type="BioGRID" id="21186">
    <property type="interactions" value="11"/>
</dbReference>
<dbReference type="FunCoup" id="Q9LVM0">
    <property type="interactions" value="1149"/>
</dbReference>
<dbReference type="IntAct" id="Q9LVM0">
    <property type="interactions" value="12"/>
</dbReference>
<dbReference type="STRING" id="3702.Q9LVM0"/>
<dbReference type="iPTMnet" id="Q9LVM0"/>
<dbReference type="SwissPalm" id="Q9LVM0"/>
<dbReference type="PaxDb" id="3702-AT5G58300.1"/>
<dbReference type="ProteomicsDB" id="243171"/>
<dbReference type="EnsemblPlants" id="AT5G58300.1">
    <property type="protein sequence ID" value="AT5G58300.1"/>
    <property type="gene ID" value="AT5G58300"/>
</dbReference>
<dbReference type="EnsemblPlants" id="AT5G58300.2">
    <property type="protein sequence ID" value="AT5G58300.2"/>
    <property type="gene ID" value="AT5G58300"/>
</dbReference>
<dbReference type="EnsemblPlants" id="AT5G58300.3">
    <property type="protein sequence ID" value="AT5G58300.3"/>
    <property type="gene ID" value="AT5G58300"/>
</dbReference>
<dbReference type="GeneID" id="835942"/>
<dbReference type="Gramene" id="AT5G58300.1">
    <property type="protein sequence ID" value="AT5G58300.1"/>
    <property type="gene ID" value="AT5G58300"/>
</dbReference>
<dbReference type="Gramene" id="AT5G58300.2">
    <property type="protein sequence ID" value="AT5G58300.2"/>
    <property type="gene ID" value="AT5G58300"/>
</dbReference>
<dbReference type="Gramene" id="AT5G58300.3">
    <property type="protein sequence ID" value="AT5G58300.3"/>
    <property type="gene ID" value="AT5G58300"/>
</dbReference>
<dbReference type="KEGG" id="ath:AT5G58300"/>
<dbReference type="Araport" id="AT5G58300"/>
<dbReference type="TAIR" id="AT5G58300"/>
<dbReference type="eggNOG" id="ENOG502QT13">
    <property type="taxonomic scope" value="Eukaryota"/>
</dbReference>
<dbReference type="HOGENOM" id="CLU_000288_92_6_1"/>
<dbReference type="InParanoid" id="Q9LVM0"/>
<dbReference type="OMA" id="CTQDNSS"/>
<dbReference type="PhylomeDB" id="Q9LVM0"/>
<dbReference type="PRO" id="PR:Q9LVM0"/>
<dbReference type="Proteomes" id="UP000006548">
    <property type="component" value="Chromosome 5"/>
</dbReference>
<dbReference type="ExpressionAtlas" id="Q9LVM0">
    <property type="expression patterns" value="baseline and differential"/>
</dbReference>
<dbReference type="GO" id="GO:0005886">
    <property type="term" value="C:plasma membrane"/>
    <property type="evidence" value="ECO:0007005"/>
    <property type="project" value="TAIR"/>
</dbReference>
<dbReference type="GO" id="GO:0005524">
    <property type="term" value="F:ATP binding"/>
    <property type="evidence" value="ECO:0007669"/>
    <property type="project" value="UniProtKB-KW"/>
</dbReference>
<dbReference type="GO" id="GO:0004672">
    <property type="term" value="F:protein kinase activity"/>
    <property type="evidence" value="ECO:0007669"/>
    <property type="project" value="InterPro"/>
</dbReference>
<dbReference type="CDD" id="cd14066">
    <property type="entry name" value="STKc_IRAK"/>
    <property type="match status" value="1"/>
</dbReference>
<dbReference type="FunFam" id="3.80.10.10:FF:000431">
    <property type="entry name" value="Leucine-rich repeat receptor-like protein kinase"/>
    <property type="match status" value="1"/>
</dbReference>
<dbReference type="FunFam" id="3.80.10.10:FF:000731">
    <property type="entry name" value="Leucine-rich repeat receptor-like protein kinase"/>
    <property type="match status" value="1"/>
</dbReference>
<dbReference type="FunFam" id="3.30.200.20:FF:000307">
    <property type="entry name" value="pollen receptor-like kinase 1"/>
    <property type="match status" value="1"/>
</dbReference>
<dbReference type="FunFam" id="1.10.510.10:FF:000095">
    <property type="entry name" value="protein STRUBBELIG-RECEPTOR FAMILY 8"/>
    <property type="match status" value="1"/>
</dbReference>
<dbReference type="Gene3D" id="3.30.200.20">
    <property type="entry name" value="Phosphorylase Kinase, domain 1"/>
    <property type="match status" value="1"/>
</dbReference>
<dbReference type="Gene3D" id="3.80.10.10">
    <property type="entry name" value="Ribonuclease Inhibitor"/>
    <property type="match status" value="2"/>
</dbReference>
<dbReference type="Gene3D" id="1.10.510.10">
    <property type="entry name" value="Transferase(Phosphotransferase) domain 1"/>
    <property type="match status" value="1"/>
</dbReference>
<dbReference type="InterPro" id="IPR050994">
    <property type="entry name" value="At_inactive_RLKs"/>
</dbReference>
<dbReference type="InterPro" id="IPR011009">
    <property type="entry name" value="Kinase-like_dom_sf"/>
</dbReference>
<dbReference type="InterPro" id="IPR001611">
    <property type="entry name" value="Leu-rich_rpt"/>
</dbReference>
<dbReference type="InterPro" id="IPR032675">
    <property type="entry name" value="LRR_dom_sf"/>
</dbReference>
<dbReference type="InterPro" id="IPR013210">
    <property type="entry name" value="LRR_N_plant-typ"/>
</dbReference>
<dbReference type="InterPro" id="IPR000719">
    <property type="entry name" value="Prot_kinase_dom"/>
</dbReference>
<dbReference type="InterPro" id="IPR017441">
    <property type="entry name" value="Protein_kinase_ATP_BS"/>
</dbReference>
<dbReference type="InterPro" id="IPR001245">
    <property type="entry name" value="Ser-Thr/Tyr_kinase_cat_dom"/>
</dbReference>
<dbReference type="PANTHER" id="PTHR48010">
    <property type="entry name" value="OS05G0588300 PROTEIN"/>
    <property type="match status" value="1"/>
</dbReference>
<dbReference type="PANTHER" id="PTHR48010:SF59">
    <property type="entry name" value="PROTEIN KINASE DOMAIN-CONTAINING PROTEIN"/>
    <property type="match status" value="1"/>
</dbReference>
<dbReference type="Pfam" id="PF00560">
    <property type="entry name" value="LRR_1"/>
    <property type="match status" value="2"/>
</dbReference>
<dbReference type="Pfam" id="PF13855">
    <property type="entry name" value="LRR_8"/>
    <property type="match status" value="1"/>
</dbReference>
<dbReference type="Pfam" id="PF08263">
    <property type="entry name" value="LRRNT_2"/>
    <property type="match status" value="1"/>
</dbReference>
<dbReference type="Pfam" id="PF07714">
    <property type="entry name" value="PK_Tyr_Ser-Thr"/>
    <property type="match status" value="1"/>
</dbReference>
<dbReference type="SUPFAM" id="SSF52058">
    <property type="entry name" value="L domain-like"/>
    <property type="match status" value="1"/>
</dbReference>
<dbReference type="SUPFAM" id="SSF56112">
    <property type="entry name" value="Protein kinase-like (PK-like)"/>
    <property type="match status" value="1"/>
</dbReference>
<dbReference type="PROSITE" id="PS00107">
    <property type="entry name" value="PROTEIN_KINASE_ATP"/>
    <property type="match status" value="1"/>
</dbReference>
<dbReference type="PROSITE" id="PS50011">
    <property type="entry name" value="PROTEIN_KINASE_DOM"/>
    <property type="match status" value="1"/>
</dbReference>
<comment type="interaction">
    <interactant intactId="EBI-4475781">
        <id>Q9LVM0</id>
    </interactant>
    <interactant intactId="EBI-20654598">
        <id>F4I065</id>
        <label>At1g49100</label>
    </interactant>
    <organismsDiffer>false</organismsDiffer>
    <experiments>2</experiments>
</comment>
<comment type="interaction">
    <interactant intactId="EBI-4475781">
        <id>Q9LVM0</id>
    </interactant>
    <interactant intactId="EBI-590903">
        <id>Q9ZWC8</id>
        <label>BRL1</label>
    </interactant>
    <organismsDiffer>false</organismsDiffer>
    <experiments>2</experiments>
</comment>
<comment type="subcellular location">
    <subcellularLocation>
        <location evidence="7">Membrane</location>
        <topology evidence="7">Single-pass membrane protein</topology>
    </subcellularLocation>
</comment>
<comment type="domain">
    <text>The protein kinase domain is predicted to be catalytically inactive.</text>
</comment>
<comment type="similarity">
    <text evidence="7">Belongs to the protein kinase superfamily.</text>
</comment>
<organism>
    <name type="scientific">Arabidopsis thaliana</name>
    <name type="common">Mouse-ear cress</name>
    <dbReference type="NCBI Taxonomy" id="3702"/>
    <lineage>
        <taxon>Eukaryota</taxon>
        <taxon>Viridiplantae</taxon>
        <taxon>Streptophyta</taxon>
        <taxon>Embryophyta</taxon>
        <taxon>Tracheophyta</taxon>
        <taxon>Spermatophyta</taxon>
        <taxon>Magnoliopsida</taxon>
        <taxon>eudicotyledons</taxon>
        <taxon>Gunneridae</taxon>
        <taxon>Pentapetalae</taxon>
        <taxon>rosids</taxon>
        <taxon>malvids</taxon>
        <taxon>Brassicales</taxon>
        <taxon>Brassicaceae</taxon>
        <taxon>Camelineae</taxon>
        <taxon>Arabidopsis</taxon>
    </lineage>
</organism>
<feature type="signal peptide" evidence="4">
    <location>
        <begin position="1"/>
        <end position="38"/>
    </location>
</feature>
<feature type="chain" id="PRO_0000324847" description="Probable inactive receptor kinase At5g58300">
    <location>
        <begin position="39"/>
        <end position="654"/>
    </location>
</feature>
<feature type="transmembrane region" description="Helical" evidence="4">
    <location>
        <begin position="282"/>
        <end position="302"/>
    </location>
</feature>
<feature type="repeat" description="LRR 1">
    <location>
        <begin position="113"/>
        <end position="135"/>
    </location>
</feature>
<feature type="repeat" description="LRR 2">
    <location>
        <begin position="137"/>
        <end position="158"/>
    </location>
</feature>
<feature type="repeat" description="LRR 3">
    <location>
        <begin position="159"/>
        <end position="182"/>
    </location>
</feature>
<feature type="repeat" description="LRR 4">
    <location>
        <begin position="183"/>
        <end position="204"/>
    </location>
</feature>
<feature type="repeat" description="LRR 5">
    <location>
        <begin position="205"/>
        <end position="228"/>
    </location>
</feature>
<feature type="domain" description="Protein kinase" evidence="5">
    <location>
        <begin position="358"/>
        <end position="631"/>
    </location>
</feature>
<feature type="region of interest" description="Disordered" evidence="6">
    <location>
        <begin position="250"/>
        <end position="272"/>
    </location>
</feature>
<feature type="region of interest" description="Disordered" evidence="6">
    <location>
        <begin position="630"/>
        <end position="654"/>
    </location>
</feature>
<feature type="compositionally biased region" description="Pro residues" evidence="6">
    <location>
        <begin position="250"/>
        <end position="267"/>
    </location>
</feature>
<feature type="binding site" evidence="5">
    <location>
        <begin position="364"/>
        <end position="372"/>
    </location>
    <ligand>
        <name>ATP</name>
        <dbReference type="ChEBI" id="CHEBI:30616"/>
    </ligand>
</feature>
<feature type="binding site" evidence="5">
    <location>
        <position position="386"/>
    </location>
    <ligand>
        <name>ATP</name>
        <dbReference type="ChEBI" id="CHEBI:30616"/>
    </ligand>
</feature>
<feature type="modified residue" description="Phosphoserine" evidence="2">
    <location>
        <position position="360"/>
    </location>
</feature>
<feature type="modified residue" description="Phosphothreonine" evidence="2">
    <location>
        <position position="381"/>
    </location>
</feature>
<feature type="modified residue" description="Phosphoserine" evidence="3">
    <location>
        <position position="441"/>
    </location>
</feature>
<feature type="modified residue" description="Phosphothreonine" evidence="1">
    <location>
        <position position="530"/>
    </location>
</feature>
<accession>Q9LVM0</accession>